<organism>
    <name type="scientific">Elusimicrobium minutum (strain Pei191)</name>
    <dbReference type="NCBI Taxonomy" id="445932"/>
    <lineage>
        <taxon>Bacteria</taxon>
        <taxon>Pseudomonadati</taxon>
        <taxon>Elusimicrobiota</taxon>
        <taxon>Elusimicrobia</taxon>
        <taxon>Elusimicrobiales</taxon>
        <taxon>Elusimicrobiaceae</taxon>
        <taxon>Elusimicrobium</taxon>
    </lineage>
</organism>
<name>SYL_ELUMP</name>
<keyword id="KW-0030">Aminoacyl-tRNA synthetase</keyword>
<keyword id="KW-0067">ATP-binding</keyword>
<keyword id="KW-0963">Cytoplasm</keyword>
<keyword id="KW-0436">Ligase</keyword>
<keyword id="KW-0547">Nucleotide-binding</keyword>
<keyword id="KW-0648">Protein biosynthesis</keyword>
<keyword id="KW-1185">Reference proteome</keyword>
<sequence>MTEINFQEIDKKQQKIWEDNNLFVTPRLPINPKFYCLDMFPYPSGQGLHVGHPEGYTASDILVRYKKMKGFDVIHPMGWDAFGLPAENYAIATGVHPAITTKNNIDNFRRQIKSLGMAYDWTREIDTTDPNYYRWTQWIFLQIFKKGLAYESTVPINWCPSCKTGLANEEVFNGNCERCGTKIESKNIRQWVLKITEYADRLLEDLEGLDWPESTLAMQRNWIGKSIGAEVDFEIDGHKENLKVFTTRPDTLFGATYMVVSPEHPILEQITMPEQKAAVKSYQEEAAAKTDFERGDVNKKTGVFTGAYAINPVNGKKIQIWTSDYVLMGYGTGAIMAVPAHDERDYEFAKKFGLEIIEVIKSDKGVEKEAFTGDGELVNSDFLNGMKVEQSKAAMIKFLEEKGVGGAKTTYRLRDWVFSRQRYWGEPIPIVHCPKCGVVPVPESELPVKLPEVTNYEPTGTGESPLANVPEWVNTVCPVCAGPAKRETNTMPQWAGSCWYYLRYLDPKNDKTFVNPEIERECDPVDCYIGGAEHAVLHLLYSRFWHKVLYDLGYVKYKEPYAKLRHQGMILAYSYRGEDGVYHGYDEVDLSDLQNPKLKTTGEKLNSMVEKMSKSKKNVINPDDILHKYGADAFRMYEMFMGPFEASKPWDMKGIEGVNRFLKRVYAWGESVETDEVFLSTKELDILRSKTIVKVSEDIEKFNFNTAVSALMIYFNDLSKIKGVPLKHFKTFLALLHPFAPHITEELWSRRKCGPFLVKTAWPEADIMLLRSEDMGLGIQVNGKVRGSITVNASASDDEIKAKAFEEPNVKKHMEGKALVKVIIVPKRMVNIVVK</sequence>
<comment type="catalytic activity">
    <reaction evidence="1">
        <text>tRNA(Leu) + L-leucine + ATP = L-leucyl-tRNA(Leu) + AMP + diphosphate</text>
        <dbReference type="Rhea" id="RHEA:11688"/>
        <dbReference type="Rhea" id="RHEA-COMP:9613"/>
        <dbReference type="Rhea" id="RHEA-COMP:9622"/>
        <dbReference type="ChEBI" id="CHEBI:30616"/>
        <dbReference type="ChEBI" id="CHEBI:33019"/>
        <dbReference type="ChEBI" id="CHEBI:57427"/>
        <dbReference type="ChEBI" id="CHEBI:78442"/>
        <dbReference type="ChEBI" id="CHEBI:78494"/>
        <dbReference type="ChEBI" id="CHEBI:456215"/>
        <dbReference type="EC" id="6.1.1.4"/>
    </reaction>
</comment>
<comment type="subcellular location">
    <subcellularLocation>
        <location evidence="1">Cytoplasm</location>
    </subcellularLocation>
</comment>
<comment type="similarity">
    <text evidence="1">Belongs to the class-I aminoacyl-tRNA synthetase family.</text>
</comment>
<proteinExistence type="inferred from homology"/>
<evidence type="ECO:0000255" key="1">
    <source>
        <dbReference type="HAMAP-Rule" id="MF_00049"/>
    </source>
</evidence>
<feature type="chain" id="PRO_1000091316" description="Leucine--tRNA ligase">
    <location>
        <begin position="1"/>
        <end position="835"/>
    </location>
</feature>
<feature type="short sequence motif" description="'HIGH' region">
    <location>
        <begin position="41"/>
        <end position="52"/>
    </location>
</feature>
<feature type="short sequence motif" description="'KMSKS' region">
    <location>
        <begin position="611"/>
        <end position="615"/>
    </location>
</feature>
<feature type="binding site" evidence="1">
    <location>
        <position position="614"/>
    </location>
    <ligand>
        <name>ATP</name>
        <dbReference type="ChEBI" id="CHEBI:30616"/>
    </ligand>
</feature>
<reference key="1">
    <citation type="journal article" date="2009" name="Appl. Environ. Microbiol.">
        <title>Genomic analysis of 'Elusimicrobium minutum,' the first cultivated representative of the phylum 'Elusimicrobia' (formerly termite group 1).</title>
        <authorList>
            <person name="Herlemann D.P.R."/>
            <person name="Geissinger O."/>
            <person name="Ikeda-Ohtsubo W."/>
            <person name="Kunin V."/>
            <person name="Sun H."/>
            <person name="Lapidus A."/>
            <person name="Hugenholtz P."/>
            <person name="Brune A."/>
        </authorList>
    </citation>
    <scope>NUCLEOTIDE SEQUENCE [LARGE SCALE GENOMIC DNA]</scope>
    <source>
        <strain>Pei191</strain>
    </source>
</reference>
<accession>B2KB05</accession>
<dbReference type="EC" id="6.1.1.4" evidence="1"/>
<dbReference type="EMBL" id="CP001055">
    <property type="protein sequence ID" value="ACC97764.1"/>
    <property type="molecule type" value="Genomic_DNA"/>
</dbReference>
<dbReference type="RefSeq" id="WP_012414379.1">
    <property type="nucleotide sequence ID" value="NC_010644.1"/>
</dbReference>
<dbReference type="SMR" id="B2KB05"/>
<dbReference type="STRING" id="445932.Emin_0201"/>
<dbReference type="KEGG" id="emi:Emin_0201"/>
<dbReference type="HOGENOM" id="CLU_004427_0_0_0"/>
<dbReference type="OrthoDB" id="9810365at2"/>
<dbReference type="Proteomes" id="UP000001029">
    <property type="component" value="Chromosome"/>
</dbReference>
<dbReference type="GO" id="GO:0005829">
    <property type="term" value="C:cytosol"/>
    <property type="evidence" value="ECO:0007669"/>
    <property type="project" value="TreeGrafter"/>
</dbReference>
<dbReference type="GO" id="GO:0002161">
    <property type="term" value="F:aminoacyl-tRNA deacylase activity"/>
    <property type="evidence" value="ECO:0007669"/>
    <property type="project" value="InterPro"/>
</dbReference>
<dbReference type="GO" id="GO:0005524">
    <property type="term" value="F:ATP binding"/>
    <property type="evidence" value="ECO:0007669"/>
    <property type="project" value="UniProtKB-UniRule"/>
</dbReference>
<dbReference type="GO" id="GO:0004823">
    <property type="term" value="F:leucine-tRNA ligase activity"/>
    <property type="evidence" value="ECO:0007669"/>
    <property type="project" value="UniProtKB-UniRule"/>
</dbReference>
<dbReference type="GO" id="GO:0006429">
    <property type="term" value="P:leucyl-tRNA aminoacylation"/>
    <property type="evidence" value="ECO:0007669"/>
    <property type="project" value="UniProtKB-UniRule"/>
</dbReference>
<dbReference type="CDD" id="cd07958">
    <property type="entry name" value="Anticodon_Ia_Leu_BEm"/>
    <property type="match status" value="1"/>
</dbReference>
<dbReference type="CDD" id="cd00812">
    <property type="entry name" value="LeuRS_core"/>
    <property type="match status" value="1"/>
</dbReference>
<dbReference type="FunFam" id="1.10.730.10:FF:000002">
    <property type="entry name" value="Leucine--tRNA ligase"/>
    <property type="match status" value="1"/>
</dbReference>
<dbReference type="FunFam" id="3.40.50.620:FF:000056">
    <property type="entry name" value="Leucine--tRNA ligase"/>
    <property type="match status" value="1"/>
</dbReference>
<dbReference type="FunFam" id="3.40.50.620:FF:000077">
    <property type="entry name" value="Leucine--tRNA ligase"/>
    <property type="match status" value="1"/>
</dbReference>
<dbReference type="Gene3D" id="3.40.50.620">
    <property type="entry name" value="HUPs"/>
    <property type="match status" value="2"/>
</dbReference>
<dbReference type="Gene3D" id="1.10.730.10">
    <property type="entry name" value="Isoleucyl-tRNA Synthetase, Domain 1"/>
    <property type="match status" value="1"/>
</dbReference>
<dbReference type="HAMAP" id="MF_00049_B">
    <property type="entry name" value="Leu_tRNA_synth_B"/>
    <property type="match status" value="1"/>
</dbReference>
<dbReference type="InterPro" id="IPR001412">
    <property type="entry name" value="aa-tRNA-synth_I_CS"/>
</dbReference>
<dbReference type="InterPro" id="IPR002300">
    <property type="entry name" value="aa-tRNA-synth_Ia"/>
</dbReference>
<dbReference type="InterPro" id="IPR002302">
    <property type="entry name" value="Leu-tRNA-ligase"/>
</dbReference>
<dbReference type="InterPro" id="IPR025709">
    <property type="entry name" value="Leu_tRNA-synth_edit"/>
</dbReference>
<dbReference type="InterPro" id="IPR013155">
    <property type="entry name" value="M/V/L/I-tRNA-synth_anticd-bd"/>
</dbReference>
<dbReference type="InterPro" id="IPR015413">
    <property type="entry name" value="Methionyl/Leucyl_tRNA_Synth"/>
</dbReference>
<dbReference type="InterPro" id="IPR014729">
    <property type="entry name" value="Rossmann-like_a/b/a_fold"/>
</dbReference>
<dbReference type="InterPro" id="IPR009080">
    <property type="entry name" value="tRNAsynth_Ia_anticodon-bd"/>
</dbReference>
<dbReference type="InterPro" id="IPR009008">
    <property type="entry name" value="Val/Leu/Ile-tRNA-synth_edit"/>
</dbReference>
<dbReference type="NCBIfam" id="TIGR00396">
    <property type="entry name" value="leuS_bact"/>
    <property type="match status" value="1"/>
</dbReference>
<dbReference type="PANTHER" id="PTHR43740:SF2">
    <property type="entry name" value="LEUCINE--TRNA LIGASE, MITOCHONDRIAL"/>
    <property type="match status" value="1"/>
</dbReference>
<dbReference type="PANTHER" id="PTHR43740">
    <property type="entry name" value="LEUCYL-TRNA SYNTHETASE"/>
    <property type="match status" value="1"/>
</dbReference>
<dbReference type="Pfam" id="PF08264">
    <property type="entry name" value="Anticodon_1"/>
    <property type="match status" value="1"/>
</dbReference>
<dbReference type="Pfam" id="PF00133">
    <property type="entry name" value="tRNA-synt_1"/>
    <property type="match status" value="1"/>
</dbReference>
<dbReference type="Pfam" id="PF13603">
    <property type="entry name" value="tRNA-synt_1_2"/>
    <property type="match status" value="1"/>
</dbReference>
<dbReference type="Pfam" id="PF09334">
    <property type="entry name" value="tRNA-synt_1g"/>
    <property type="match status" value="1"/>
</dbReference>
<dbReference type="PRINTS" id="PR00985">
    <property type="entry name" value="TRNASYNTHLEU"/>
</dbReference>
<dbReference type="SUPFAM" id="SSF47323">
    <property type="entry name" value="Anticodon-binding domain of a subclass of class I aminoacyl-tRNA synthetases"/>
    <property type="match status" value="1"/>
</dbReference>
<dbReference type="SUPFAM" id="SSF52374">
    <property type="entry name" value="Nucleotidylyl transferase"/>
    <property type="match status" value="1"/>
</dbReference>
<dbReference type="SUPFAM" id="SSF50677">
    <property type="entry name" value="ValRS/IleRS/LeuRS editing domain"/>
    <property type="match status" value="1"/>
</dbReference>
<dbReference type="PROSITE" id="PS00178">
    <property type="entry name" value="AA_TRNA_LIGASE_I"/>
    <property type="match status" value="1"/>
</dbReference>
<gene>
    <name evidence="1" type="primary">leuS</name>
    <name type="ordered locus">Emin_0201</name>
</gene>
<protein>
    <recommendedName>
        <fullName evidence="1">Leucine--tRNA ligase</fullName>
        <ecNumber evidence="1">6.1.1.4</ecNumber>
    </recommendedName>
    <alternativeName>
        <fullName evidence="1">Leucyl-tRNA synthetase</fullName>
        <shortName evidence="1">LeuRS</shortName>
    </alternativeName>
</protein>